<dbReference type="EMBL" id="BC105153">
    <property type="protein sequence ID" value="AAI05154.1"/>
    <property type="molecule type" value="mRNA"/>
</dbReference>
<dbReference type="RefSeq" id="NP_001030459.1">
    <property type="nucleotide sequence ID" value="NM_001035382.2"/>
</dbReference>
<dbReference type="BMRB" id="Q3MHQ0"/>
<dbReference type="SMR" id="Q3MHQ0"/>
<dbReference type="CORUM" id="Q3MHQ0"/>
<dbReference type="FunCoup" id="Q3MHQ0">
    <property type="interactions" value="25"/>
</dbReference>
<dbReference type="STRING" id="9913.ENSBTAP00000001304"/>
<dbReference type="GeneID" id="530709"/>
<dbReference type="KEGG" id="bta:530709"/>
<dbReference type="CTD" id="10083"/>
<dbReference type="eggNOG" id="KOG3528">
    <property type="taxonomic scope" value="Eukaryota"/>
</dbReference>
<dbReference type="InParanoid" id="Q3MHQ0"/>
<dbReference type="OrthoDB" id="7734647at2759"/>
<dbReference type="Proteomes" id="UP000009136">
    <property type="component" value="Unplaced"/>
</dbReference>
<dbReference type="GO" id="GO:0005903">
    <property type="term" value="C:brush border"/>
    <property type="evidence" value="ECO:0000250"/>
    <property type="project" value="UniProtKB"/>
</dbReference>
<dbReference type="GO" id="GO:0005929">
    <property type="term" value="C:cilium"/>
    <property type="evidence" value="ECO:0000318"/>
    <property type="project" value="GO_Central"/>
</dbReference>
<dbReference type="GO" id="GO:0005856">
    <property type="term" value="C:cytoskeleton"/>
    <property type="evidence" value="ECO:0007669"/>
    <property type="project" value="UniProtKB-SubCell"/>
</dbReference>
<dbReference type="GO" id="GO:0005829">
    <property type="term" value="C:cytosol"/>
    <property type="evidence" value="ECO:0007669"/>
    <property type="project" value="UniProtKB-SubCell"/>
</dbReference>
<dbReference type="GO" id="GO:0005902">
    <property type="term" value="C:microvillus"/>
    <property type="evidence" value="ECO:0000250"/>
    <property type="project" value="UniProtKB"/>
</dbReference>
<dbReference type="GO" id="GO:0001917">
    <property type="term" value="C:photoreceptor inner segment"/>
    <property type="evidence" value="ECO:0000318"/>
    <property type="project" value="GO_Central"/>
</dbReference>
<dbReference type="GO" id="GO:0005886">
    <property type="term" value="C:plasma membrane"/>
    <property type="evidence" value="ECO:0000318"/>
    <property type="project" value="GO_Central"/>
</dbReference>
<dbReference type="GO" id="GO:0002142">
    <property type="term" value="C:stereocilia ankle link complex"/>
    <property type="evidence" value="ECO:0000318"/>
    <property type="project" value="GO_Central"/>
</dbReference>
<dbReference type="GO" id="GO:0032426">
    <property type="term" value="C:stereocilium tip"/>
    <property type="evidence" value="ECO:0000318"/>
    <property type="project" value="GO_Central"/>
</dbReference>
<dbReference type="GO" id="GO:0002093">
    <property type="term" value="P:auditory receptor cell morphogenesis"/>
    <property type="evidence" value="ECO:0000318"/>
    <property type="project" value="GO_Central"/>
</dbReference>
<dbReference type="GO" id="GO:1904970">
    <property type="term" value="P:brush border assembly"/>
    <property type="evidence" value="ECO:0000250"/>
    <property type="project" value="UniProtKB"/>
</dbReference>
<dbReference type="GO" id="GO:0060122">
    <property type="term" value="P:inner ear receptor cell stereocilium organization"/>
    <property type="evidence" value="ECO:0000318"/>
    <property type="project" value="GO_Central"/>
</dbReference>
<dbReference type="GO" id="GO:1904106">
    <property type="term" value="P:protein localization to microvillus"/>
    <property type="evidence" value="ECO:0000250"/>
    <property type="project" value="UniProtKB"/>
</dbReference>
<dbReference type="GO" id="GO:0032532">
    <property type="term" value="P:regulation of microvillus length"/>
    <property type="evidence" value="ECO:0000250"/>
    <property type="project" value="UniProtKB"/>
</dbReference>
<dbReference type="GO" id="GO:0046549">
    <property type="term" value="P:retinal cone cell development"/>
    <property type="evidence" value="ECO:0000318"/>
    <property type="project" value="GO_Central"/>
</dbReference>
<dbReference type="GO" id="GO:0007605">
    <property type="term" value="P:sensory perception of sound"/>
    <property type="evidence" value="ECO:0000318"/>
    <property type="project" value="GO_Central"/>
</dbReference>
<dbReference type="CDD" id="cd07353">
    <property type="entry name" value="harmonin_N"/>
    <property type="match status" value="1"/>
</dbReference>
<dbReference type="CDD" id="cd06737">
    <property type="entry name" value="PDZ1_harmonin"/>
    <property type="match status" value="1"/>
</dbReference>
<dbReference type="CDD" id="cd06738">
    <property type="entry name" value="PDZ2_harmonin"/>
    <property type="match status" value="1"/>
</dbReference>
<dbReference type="CDD" id="cd06739">
    <property type="entry name" value="PDZ3_harmonin"/>
    <property type="match status" value="1"/>
</dbReference>
<dbReference type="FunFam" id="1.20.1160.20:FF:000001">
    <property type="entry name" value="harmonin isoform X1"/>
    <property type="match status" value="1"/>
</dbReference>
<dbReference type="FunFam" id="2.30.42.10:FF:000062">
    <property type="entry name" value="harmonin isoform X1"/>
    <property type="match status" value="1"/>
</dbReference>
<dbReference type="FunFam" id="2.30.42.10:FF:000071">
    <property type="entry name" value="harmonin isoform X1"/>
    <property type="match status" value="1"/>
</dbReference>
<dbReference type="FunFam" id="2.30.42.10:FF:000104">
    <property type="entry name" value="harmonin isoform X2"/>
    <property type="match status" value="1"/>
</dbReference>
<dbReference type="Gene3D" id="1.20.1160.20">
    <property type="match status" value="1"/>
</dbReference>
<dbReference type="Gene3D" id="2.30.42.10">
    <property type="match status" value="3"/>
</dbReference>
<dbReference type="InterPro" id="IPR030237">
    <property type="entry name" value="Harmonin_N"/>
</dbReference>
<dbReference type="InterPro" id="IPR001478">
    <property type="entry name" value="PDZ"/>
</dbReference>
<dbReference type="InterPro" id="IPR036034">
    <property type="entry name" value="PDZ_sf"/>
</dbReference>
<dbReference type="InterPro" id="IPR051844">
    <property type="entry name" value="USH2_Complex_Protein"/>
</dbReference>
<dbReference type="PANTHER" id="PTHR23116:SF36">
    <property type="entry name" value="HARMONIN"/>
    <property type="match status" value="1"/>
</dbReference>
<dbReference type="PANTHER" id="PTHR23116">
    <property type="entry name" value="PDZ DOMAIN CONTAINING WHIRLIN AND HARMONIN-RELATED"/>
    <property type="match status" value="1"/>
</dbReference>
<dbReference type="Pfam" id="PF00595">
    <property type="entry name" value="PDZ"/>
    <property type="match status" value="3"/>
</dbReference>
<dbReference type="Pfam" id="PF21219">
    <property type="entry name" value="USH1C_N"/>
    <property type="match status" value="1"/>
</dbReference>
<dbReference type="SMART" id="SM00228">
    <property type="entry name" value="PDZ"/>
    <property type="match status" value="3"/>
</dbReference>
<dbReference type="SUPFAM" id="SSF50156">
    <property type="entry name" value="PDZ domain-like"/>
    <property type="match status" value="3"/>
</dbReference>
<dbReference type="PROSITE" id="PS50106">
    <property type="entry name" value="PDZ"/>
    <property type="match status" value="3"/>
</dbReference>
<proteinExistence type="evidence at transcript level"/>
<organism>
    <name type="scientific">Bos taurus</name>
    <name type="common">Bovine</name>
    <dbReference type="NCBI Taxonomy" id="9913"/>
    <lineage>
        <taxon>Eukaryota</taxon>
        <taxon>Metazoa</taxon>
        <taxon>Chordata</taxon>
        <taxon>Craniata</taxon>
        <taxon>Vertebrata</taxon>
        <taxon>Euteleostomi</taxon>
        <taxon>Mammalia</taxon>
        <taxon>Eutheria</taxon>
        <taxon>Laurasiatheria</taxon>
        <taxon>Artiodactyla</taxon>
        <taxon>Ruminantia</taxon>
        <taxon>Pecora</taxon>
        <taxon>Bovidae</taxon>
        <taxon>Bovinae</taxon>
        <taxon>Bos</taxon>
    </lineage>
</organism>
<name>USH1C_BOVIN</name>
<keyword id="KW-0966">Cell projection</keyword>
<keyword id="KW-0175">Coiled coil</keyword>
<keyword id="KW-0963">Cytoplasm</keyword>
<keyword id="KW-0206">Cytoskeleton</keyword>
<keyword id="KW-0221">Differentiation</keyword>
<keyword id="KW-1009">Hearing</keyword>
<keyword id="KW-0597">Phosphoprotein</keyword>
<keyword id="KW-1185">Reference proteome</keyword>
<keyword id="KW-0677">Repeat</keyword>
<comment type="function">
    <text evidence="1 2">Anchoring/scaffolding protein that is a part of the functional network formed by USH1C, USH1G, CDH23 and MYO7A that mediates mechanotransduction in cochlear hair cells. Required for normal development and maintenance of cochlear hair cell bundles (By similarity). As part of the intermicrovillar adhesion complex/IMAC plays a role in brush border differentiation, controlling microvilli organization and length. Probably plays a central regulatory role in the assembly of the complex, recruiting CDHR2, CDHR5 and MYO7B to the microvilli tips (By similarity).</text>
</comment>
<comment type="subunit">
    <text evidence="1 2">Part of the IMAC/intermicrovillar adhesion complex/intermicrovillar tip-link complex composed of ANKS4B, MYO7B, USH1C, CDHR2 and CDHR5 (By similarity). Part of a complex composed of USH1C, USH1G and MYO7A (By similarity). Interacts with F-actin (By similarity). Interacts with USH2A (By similarity). Interacts with SLC4A7. Interacts (via PDZ1 domain) with the C-terminus of USHBP1 (By similarity). Interacts (via N-terminus and PDZ 2 domain) with CDH23 (By similarity). Interacts with USH1G (By similarity). Interacts with MYO7B (By similarity). Interacts with CDHR2 and CDHR5; may mediate their interaction with MYO7B at the microvilli tip (By similarity). Interacts (via PDZ 1 domain) with ANKS4B (By similarity). Interacts (via PDZ 1 domain) with DOCK4 (By similarity).</text>
</comment>
<comment type="subcellular location">
    <subcellularLocation>
        <location evidence="2">Cytoplasm</location>
        <location evidence="2">Cytosol</location>
    </subcellularLocation>
    <subcellularLocation>
        <location evidence="2">Cytoplasm</location>
        <location evidence="2">Cytoskeleton</location>
    </subcellularLocation>
    <subcellularLocation>
        <location evidence="2">Cell projection</location>
        <location evidence="2">Microvillus</location>
    </subcellularLocation>
    <text evidence="1 2">Colocalizes with F-actin. Detected at the tip of cochlear hair cell stereocilia (By similarity). Enriched in microvilli of the intestinal brush border (By similarity).</text>
</comment>
<comment type="domain">
    <text evidence="2">The PDZ 1 domain mediates interaction with ANKS4B, USHBP1, USH1G, SLC4A7.</text>
</comment>
<comment type="domain">
    <text evidence="2">The N-terminal region constitutes an independently folded domain that has structural similarity with the CCM2 C-terminus, despite very low sequence similarity.</text>
</comment>
<accession>Q3MHQ0</accession>
<gene>
    <name type="primary">USH1C</name>
</gene>
<reference key="1">
    <citation type="submission" date="2005-09" db="EMBL/GenBank/DDBJ databases">
        <authorList>
            <consortium name="NIH - Mammalian Gene Collection (MGC) project"/>
        </authorList>
    </citation>
    <scope>NUCLEOTIDE SEQUENCE [LARGE SCALE MRNA]</scope>
    <source>
        <strain>Crossbred X Angus</strain>
        <tissue>Ileum</tissue>
    </source>
</reference>
<protein>
    <recommendedName>
        <fullName>Harmonin</fullName>
    </recommendedName>
    <alternativeName>
        <fullName>Usher syndrome type-1C protein homolog</fullName>
    </alternativeName>
</protein>
<sequence length="551" mass="62065">MDRKVAREFRHKVDFLIENDAEKDYLYDVLRMYHQTMDVAVLVGDLKLVINEPSRLPLFDAIRPLIPLKHQVEYDQLTPRRSRKLKEVRLDRLHPEGLGLSVRGGLEFGCGLFISHLIKDGQADSVGLQVGDEIVRINGYSISSCTHEEVINLIRTKKTVSIKVRHIGLIPVKSSPDEPLKWQYVDQFVSESGGGRSSLGSPGSQENKEKKVFISLVGSRGLGCSISSGPIQKPGIFISHVKPGSLSAEVGLETGDQIVEVNGIDFSNLDHKEAVNVLKSSRSLTISIVAGAGRELFMTDQERLAEVRQRELQRQELLMQKRLAMESNKILQEQQEMERQRKKEIAQKAAEENERYRKEMEQIVEEEEKFRKQWEEDWGSKEQLRSPKTITAEVHPIPLRKPKYDLGVDPEFDPADDLDGGTNKRGEQDFRKYEEGFDPYSMFTPEQIMGKDVRLLRVKKEGALDLALEGGVDSPIGKVVVSAVYEGGAAERHGGIVKGDEIMAINGKIVTDYTLAEAEAALQKAWNQGDWIDLVVAVCPPKEYDDELTFF</sequence>
<feature type="chain" id="PRO_0000287208" description="Harmonin">
    <location>
        <begin position="1"/>
        <end position="551"/>
    </location>
</feature>
<feature type="domain" description="PDZ 1" evidence="4">
    <location>
        <begin position="87"/>
        <end position="169"/>
    </location>
</feature>
<feature type="domain" description="PDZ 2" evidence="4">
    <location>
        <begin position="211"/>
        <end position="293"/>
    </location>
</feature>
<feature type="domain" description="PDZ 3" evidence="4">
    <location>
        <begin position="452"/>
        <end position="536"/>
    </location>
</feature>
<feature type="region of interest" description="N-terminal domain" evidence="2">
    <location>
        <begin position="1"/>
        <end position="86"/>
    </location>
</feature>
<feature type="region of interest" description="Mediates interaction with MYO7B" evidence="2">
    <location>
        <begin position="194"/>
        <end position="532"/>
    </location>
</feature>
<feature type="region of interest" description="Disordered" evidence="5">
    <location>
        <begin position="401"/>
        <end position="425"/>
    </location>
</feature>
<feature type="coiled-coil region" evidence="3">
    <location>
        <begin position="318"/>
        <end position="377"/>
    </location>
</feature>
<feature type="compositionally biased region" description="Acidic residues" evidence="5">
    <location>
        <begin position="408"/>
        <end position="419"/>
    </location>
</feature>
<feature type="modified residue" description="Phosphoserine" evidence="1">
    <location>
        <position position="219"/>
    </location>
</feature>
<evidence type="ECO:0000250" key="1">
    <source>
        <dbReference type="UniProtKB" id="Q9ES64"/>
    </source>
</evidence>
<evidence type="ECO:0000250" key="2">
    <source>
        <dbReference type="UniProtKB" id="Q9Y6N9"/>
    </source>
</evidence>
<evidence type="ECO:0000255" key="3"/>
<evidence type="ECO:0000255" key="4">
    <source>
        <dbReference type="PROSITE-ProRule" id="PRU00143"/>
    </source>
</evidence>
<evidence type="ECO:0000256" key="5">
    <source>
        <dbReference type="SAM" id="MobiDB-lite"/>
    </source>
</evidence>